<feature type="chain" id="PRO_0000059683" description="UDP-3-O-acylglucosamine N-acyltransferase">
    <location>
        <begin position="1"/>
        <end position="347"/>
    </location>
</feature>
<feature type="active site" description="Proton acceptor" evidence="1">
    <location>
        <position position="241"/>
    </location>
</feature>
<protein>
    <recommendedName>
        <fullName evidence="1">UDP-3-O-acylglucosamine N-acyltransferase</fullName>
        <ecNumber evidence="1">2.3.1.191</ecNumber>
    </recommendedName>
</protein>
<keyword id="KW-0012">Acyltransferase</keyword>
<keyword id="KW-0441">Lipid A biosynthesis</keyword>
<keyword id="KW-0444">Lipid biosynthesis</keyword>
<keyword id="KW-0443">Lipid metabolism</keyword>
<keyword id="KW-0677">Repeat</keyword>
<keyword id="KW-0808">Transferase</keyword>
<sequence length="347" mass="36354">MIPATYTLSQITARLGGEWRGEDTSVTAVRPLADAQAEHISFLANPKYKAEVHDSSAGAVIVSAKAADGFEGRNLIVADDPYLYFAKVARLFSPVVKARGGIHPTAVVEESATVPASCEIGANAYIGANTVLGEGCRILANAVVQHDCRLGDEVVLHPNAVVYYGCTLGRRVEIHSGAVIGADGFGLAFAGDSWFKIPQTGAVTLGDDVEIGSNTNIDRGAMSDTTVGNGTKIDNQVQIGHNCKIGSHTVIAAKTGISGSVTIGSYCIIGGGVGTVGHIEIADKTTIGGGTSVTHSITESGKHLAGIFPMSTHKEWARNAVYIHRLSEMNKRLKTLEQQLSDGKDTQ</sequence>
<evidence type="ECO:0000255" key="1">
    <source>
        <dbReference type="HAMAP-Rule" id="MF_00523"/>
    </source>
</evidence>
<reference key="1">
    <citation type="journal article" date="2000" name="Nature">
        <title>Complete DNA sequence of a serogroup A strain of Neisseria meningitidis Z2491.</title>
        <authorList>
            <person name="Parkhill J."/>
            <person name="Achtman M."/>
            <person name="James K.D."/>
            <person name="Bentley S.D."/>
            <person name="Churcher C.M."/>
            <person name="Klee S.R."/>
            <person name="Morelli G."/>
            <person name="Basham D."/>
            <person name="Brown D."/>
            <person name="Chillingworth T."/>
            <person name="Davies R.M."/>
            <person name="Davis P."/>
            <person name="Devlin K."/>
            <person name="Feltwell T."/>
            <person name="Hamlin N."/>
            <person name="Holroyd S."/>
            <person name="Jagels K."/>
            <person name="Leather S."/>
            <person name="Moule S."/>
            <person name="Mungall K.L."/>
            <person name="Quail M.A."/>
            <person name="Rajandream M.A."/>
            <person name="Rutherford K.M."/>
            <person name="Simmonds M."/>
            <person name="Skelton J."/>
            <person name="Whitehead S."/>
            <person name="Spratt B.G."/>
            <person name="Barrell B.G."/>
        </authorList>
    </citation>
    <scope>NUCLEOTIDE SEQUENCE [LARGE SCALE GENOMIC DNA]</scope>
    <source>
        <strain>DSM 15465 / Z2491</strain>
    </source>
</reference>
<comment type="function">
    <text evidence="1">Catalyzes the N-acylation of UDP-3-O-acylglucosamine using 3-hydroxyacyl-ACP as the acyl donor. Is involved in the biosynthesis of lipid A, a phosphorylated glycolipid that anchors the lipopolysaccharide to the outer membrane of the cell.</text>
</comment>
<comment type="catalytic activity">
    <reaction evidence="1">
        <text>a UDP-3-O-[(3R)-3-hydroxyacyl]-alpha-D-glucosamine + a (3R)-hydroxyacyl-[ACP] = a UDP-2-N,3-O-bis[(3R)-3-hydroxyacyl]-alpha-D-glucosamine + holo-[ACP] + H(+)</text>
        <dbReference type="Rhea" id="RHEA:53836"/>
        <dbReference type="Rhea" id="RHEA-COMP:9685"/>
        <dbReference type="Rhea" id="RHEA-COMP:9945"/>
        <dbReference type="ChEBI" id="CHEBI:15378"/>
        <dbReference type="ChEBI" id="CHEBI:64479"/>
        <dbReference type="ChEBI" id="CHEBI:78827"/>
        <dbReference type="ChEBI" id="CHEBI:137740"/>
        <dbReference type="ChEBI" id="CHEBI:137748"/>
        <dbReference type="EC" id="2.3.1.191"/>
    </reaction>
</comment>
<comment type="pathway">
    <text evidence="1">Bacterial outer membrane biogenesis; LPS lipid A biosynthesis.</text>
</comment>
<comment type="subunit">
    <text evidence="1">Homotrimer.</text>
</comment>
<comment type="similarity">
    <text evidence="1">Belongs to the transferase hexapeptide repeat family. LpxD subfamily.</text>
</comment>
<name>LPXD_NEIMA</name>
<proteinExistence type="inferred from homology"/>
<gene>
    <name evidence="1" type="primary">lpxD</name>
    <name type="ordered locus">NMA0087</name>
</gene>
<organism>
    <name type="scientific">Neisseria meningitidis serogroup A / serotype 4A (strain DSM 15465 / Z2491)</name>
    <dbReference type="NCBI Taxonomy" id="122587"/>
    <lineage>
        <taxon>Bacteria</taxon>
        <taxon>Pseudomonadati</taxon>
        <taxon>Pseudomonadota</taxon>
        <taxon>Betaproteobacteria</taxon>
        <taxon>Neisseriales</taxon>
        <taxon>Neisseriaceae</taxon>
        <taxon>Neisseria</taxon>
    </lineage>
</organism>
<accession>Q9JX29</accession>
<accession>A1INU9</accession>
<dbReference type="EC" id="2.3.1.191" evidence="1"/>
<dbReference type="EMBL" id="AL157959">
    <property type="protein sequence ID" value="CAM07406.1"/>
    <property type="molecule type" value="Genomic_DNA"/>
</dbReference>
<dbReference type="PIR" id="F82000">
    <property type="entry name" value="F82000"/>
</dbReference>
<dbReference type="RefSeq" id="WP_002245797.1">
    <property type="nucleotide sequence ID" value="NC_003116.1"/>
</dbReference>
<dbReference type="SMR" id="Q9JX29"/>
<dbReference type="EnsemblBacteria" id="CAM07406">
    <property type="protein sequence ID" value="CAM07406"/>
    <property type="gene ID" value="NMA0087"/>
</dbReference>
<dbReference type="GeneID" id="93387258"/>
<dbReference type="KEGG" id="nma:NMA0087"/>
<dbReference type="HOGENOM" id="CLU_049865_0_1_4"/>
<dbReference type="UniPathway" id="UPA00973"/>
<dbReference type="Proteomes" id="UP000000626">
    <property type="component" value="Chromosome"/>
</dbReference>
<dbReference type="GO" id="GO:0016020">
    <property type="term" value="C:membrane"/>
    <property type="evidence" value="ECO:0007669"/>
    <property type="project" value="GOC"/>
</dbReference>
<dbReference type="GO" id="GO:0016410">
    <property type="term" value="F:N-acyltransferase activity"/>
    <property type="evidence" value="ECO:0007669"/>
    <property type="project" value="InterPro"/>
</dbReference>
<dbReference type="GO" id="GO:0009245">
    <property type="term" value="P:lipid A biosynthetic process"/>
    <property type="evidence" value="ECO:0007669"/>
    <property type="project" value="UniProtKB-UniRule"/>
</dbReference>
<dbReference type="CDD" id="cd03352">
    <property type="entry name" value="LbH_LpxD"/>
    <property type="match status" value="1"/>
</dbReference>
<dbReference type="Gene3D" id="1.20.5.170">
    <property type="match status" value="1"/>
</dbReference>
<dbReference type="Gene3D" id="2.160.10.10">
    <property type="entry name" value="Hexapeptide repeat proteins"/>
    <property type="match status" value="1"/>
</dbReference>
<dbReference type="Gene3D" id="3.40.1390.10">
    <property type="entry name" value="MurE/MurF, N-terminal domain"/>
    <property type="match status" value="1"/>
</dbReference>
<dbReference type="HAMAP" id="MF_00523">
    <property type="entry name" value="LpxD"/>
    <property type="match status" value="1"/>
</dbReference>
<dbReference type="InterPro" id="IPR001451">
    <property type="entry name" value="Hexapep"/>
</dbReference>
<dbReference type="InterPro" id="IPR018357">
    <property type="entry name" value="Hexapep_transf_CS"/>
</dbReference>
<dbReference type="InterPro" id="IPR007691">
    <property type="entry name" value="LpxD"/>
</dbReference>
<dbReference type="InterPro" id="IPR011004">
    <property type="entry name" value="Trimer_LpxA-like_sf"/>
</dbReference>
<dbReference type="InterPro" id="IPR020573">
    <property type="entry name" value="UDP_GlcNAc_AcTrfase_non-rep"/>
</dbReference>
<dbReference type="NCBIfam" id="TIGR01853">
    <property type="entry name" value="lipid_A_lpxD"/>
    <property type="match status" value="1"/>
</dbReference>
<dbReference type="NCBIfam" id="NF002060">
    <property type="entry name" value="PRK00892.1"/>
    <property type="match status" value="1"/>
</dbReference>
<dbReference type="PANTHER" id="PTHR43378">
    <property type="entry name" value="UDP-3-O-ACYLGLUCOSAMINE N-ACYLTRANSFERASE"/>
    <property type="match status" value="1"/>
</dbReference>
<dbReference type="PANTHER" id="PTHR43378:SF2">
    <property type="entry name" value="UDP-3-O-ACYLGLUCOSAMINE N-ACYLTRANSFERASE 1, MITOCHONDRIAL-RELATED"/>
    <property type="match status" value="1"/>
</dbReference>
<dbReference type="Pfam" id="PF00132">
    <property type="entry name" value="Hexapep"/>
    <property type="match status" value="2"/>
</dbReference>
<dbReference type="Pfam" id="PF04613">
    <property type="entry name" value="LpxD"/>
    <property type="match status" value="1"/>
</dbReference>
<dbReference type="SUPFAM" id="SSF51161">
    <property type="entry name" value="Trimeric LpxA-like enzymes"/>
    <property type="match status" value="1"/>
</dbReference>
<dbReference type="PROSITE" id="PS00101">
    <property type="entry name" value="HEXAPEP_TRANSFERASES"/>
    <property type="match status" value="1"/>
</dbReference>